<organism>
    <name type="scientific">Leptothrix cholodnii (strain ATCC 51168 / LMG 8142 / SP-6)</name>
    <name type="common">Leptothrix discophora (strain SP-6)</name>
    <dbReference type="NCBI Taxonomy" id="395495"/>
    <lineage>
        <taxon>Bacteria</taxon>
        <taxon>Pseudomonadati</taxon>
        <taxon>Pseudomonadota</taxon>
        <taxon>Betaproteobacteria</taxon>
        <taxon>Burkholderiales</taxon>
        <taxon>Sphaerotilaceae</taxon>
        <taxon>Leptothrix</taxon>
    </lineage>
</organism>
<gene>
    <name evidence="1" type="primary">efp</name>
    <name type="ordered locus">Lcho_1934</name>
</gene>
<comment type="function">
    <text evidence="1">Involved in peptide bond synthesis. Stimulates efficient translation and peptide-bond synthesis on native or reconstituted 70S ribosomes in vitro. Probably functions indirectly by altering the affinity of the ribosome for aminoacyl-tRNA, thus increasing their reactivity as acceptors for peptidyl transferase.</text>
</comment>
<comment type="pathway">
    <text evidence="1">Protein biosynthesis; polypeptide chain elongation.</text>
</comment>
<comment type="subcellular location">
    <subcellularLocation>
        <location evidence="1">Cytoplasm</location>
    </subcellularLocation>
</comment>
<comment type="similarity">
    <text evidence="1">Belongs to the elongation factor P family.</text>
</comment>
<proteinExistence type="inferred from homology"/>
<evidence type="ECO:0000255" key="1">
    <source>
        <dbReference type="HAMAP-Rule" id="MF_00141"/>
    </source>
</evidence>
<sequence length="184" mass="20605">MKIAQEIRAGNVIMHGKDPMVVLKTEYSRGGRNSATVRMKLKSLLSNSGTEVVFKADDKMDQIILDKKECTYSYFADPMYAFMDADFNQFEVEAENMGDAISYLEDGMAVEVVFYDGKAISVELPTSLVREVTWTEPAVKGDTSGKVLKPAKLATGFDIQVPIFVAQGDKIEIDTRTHEYRKRV</sequence>
<name>EFP_LEPCP</name>
<feature type="chain" id="PRO_1000096171" description="Elongation factor P">
    <location>
        <begin position="1"/>
        <end position="184"/>
    </location>
</feature>
<accession>B1Y0U3</accession>
<dbReference type="EMBL" id="CP001013">
    <property type="protein sequence ID" value="ACB34201.1"/>
    <property type="molecule type" value="Genomic_DNA"/>
</dbReference>
<dbReference type="RefSeq" id="WP_012346962.1">
    <property type="nucleotide sequence ID" value="NC_010524.1"/>
</dbReference>
<dbReference type="SMR" id="B1Y0U3"/>
<dbReference type="STRING" id="395495.Lcho_1934"/>
<dbReference type="KEGG" id="lch:Lcho_1934"/>
<dbReference type="eggNOG" id="COG0231">
    <property type="taxonomic scope" value="Bacteria"/>
</dbReference>
<dbReference type="HOGENOM" id="CLU_074944_2_1_4"/>
<dbReference type="OrthoDB" id="9801844at2"/>
<dbReference type="UniPathway" id="UPA00345"/>
<dbReference type="Proteomes" id="UP000001693">
    <property type="component" value="Chromosome"/>
</dbReference>
<dbReference type="GO" id="GO:0005737">
    <property type="term" value="C:cytoplasm"/>
    <property type="evidence" value="ECO:0007669"/>
    <property type="project" value="UniProtKB-SubCell"/>
</dbReference>
<dbReference type="GO" id="GO:0003746">
    <property type="term" value="F:translation elongation factor activity"/>
    <property type="evidence" value="ECO:0007669"/>
    <property type="project" value="UniProtKB-UniRule"/>
</dbReference>
<dbReference type="GO" id="GO:0043043">
    <property type="term" value="P:peptide biosynthetic process"/>
    <property type="evidence" value="ECO:0007669"/>
    <property type="project" value="InterPro"/>
</dbReference>
<dbReference type="CDD" id="cd04470">
    <property type="entry name" value="S1_EF-P_repeat_1"/>
    <property type="match status" value="1"/>
</dbReference>
<dbReference type="CDD" id="cd05794">
    <property type="entry name" value="S1_EF-P_repeat_2"/>
    <property type="match status" value="1"/>
</dbReference>
<dbReference type="FunFam" id="2.30.30.30:FF:000003">
    <property type="entry name" value="Elongation factor P"/>
    <property type="match status" value="1"/>
</dbReference>
<dbReference type="FunFam" id="2.40.50.140:FF:000004">
    <property type="entry name" value="Elongation factor P"/>
    <property type="match status" value="1"/>
</dbReference>
<dbReference type="FunFam" id="2.40.50.140:FF:000009">
    <property type="entry name" value="Elongation factor P"/>
    <property type="match status" value="1"/>
</dbReference>
<dbReference type="Gene3D" id="2.30.30.30">
    <property type="match status" value="1"/>
</dbReference>
<dbReference type="Gene3D" id="2.40.50.140">
    <property type="entry name" value="Nucleic acid-binding proteins"/>
    <property type="match status" value="2"/>
</dbReference>
<dbReference type="HAMAP" id="MF_00141">
    <property type="entry name" value="EF_P"/>
    <property type="match status" value="1"/>
</dbReference>
<dbReference type="InterPro" id="IPR015365">
    <property type="entry name" value="Elong-fact-P_C"/>
</dbReference>
<dbReference type="InterPro" id="IPR012340">
    <property type="entry name" value="NA-bd_OB-fold"/>
</dbReference>
<dbReference type="InterPro" id="IPR014722">
    <property type="entry name" value="Rib_uL2_dom2"/>
</dbReference>
<dbReference type="InterPro" id="IPR020599">
    <property type="entry name" value="Transl_elong_fac_P/YeiP"/>
</dbReference>
<dbReference type="InterPro" id="IPR013185">
    <property type="entry name" value="Transl_elong_KOW-like"/>
</dbReference>
<dbReference type="InterPro" id="IPR001059">
    <property type="entry name" value="Transl_elong_P/YeiP_cen"/>
</dbReference>
<dbReference type="InterPro" id="IPR013852">
    <property type="entry name" value="Transl_elong_P/YeiP_CS"/>
</dbReference>
<dbReference type="InterPro" id="IPR011768">
    <property type="entry name" value="Transl_elongation_fac_P"/>
</dbReference>
<dbReference type="InterPro" id="IPR008991">
    <property type="entry name" value="Translation_prot_SH3-like_sf"/>
</dbReference>
<dbReference type="NCBIfam" id="TIGR00038">
    <property type="entry name" value="efp"/>
    <property type="match status" value="1"/>
</dbReference>
<dbReference type="NCBIfam" id="NF001810">
    <property type="entry name" value="PRK00529.1"/>
    <property type="match status" value="1"/>
</dbReference>
<dbReference type="PANTHER" id="PTHR30053">
    <property type="entry name" value="ELONGATION FACTOR P"/>
    <property type="match status" value="1"/>
</dbReference>
<dbReference type="PANTHER" id="PTHR30053:SF12">
    <property type="entry name" value="ELONGATION FACTOR P (EF-P) FAMILY PROTEIN"/>
    <property type="match status" value="1"/>
</dbReference>
<dbReference type="Pfam" id="PF01132">
    <property type="entry name" value="EFP"/>
    <property type="match status" value="1"/>
</dbReference>
<dbReference type="Pfam" id="PF08207">
    <property type="entry name" value="EFP_N"/>
    <property type="match status" value="1"/>
</dbReference>
<dbReference type="Pfam" id="PF09285">
    <property type="entry name" value="Elong-fact-P_C"/>
    <property type="match status" value="1"/>
</dbReference>
<dbReference type="PIRSF" id="PIRSF005901">
    <property type="entry name" value="EF-P"/>
    <property type="match status" value="1"/>
</dbReference>
<dbReference type="SMART" id="SM01185">
    <property type="entry name" value="EFP"/>
    <property type="match status" value="1"/>
</dbReference>
<dbReference type="SMART" id="SM00841">
    <property type="entry name" value="Elong-fact-P_C"/>
    <property type="match status" value="1"/>
</dbReference>
<dbReference type="SUPFAM" id="SSF50249">
    <property type="entry name" value="Nucleic acid-binding proteins"/>
    <property type="match status" value="2"/>
</dbReference>
<dbReference type="SUPFAM" id="SSF50104">
    <property type="entry name" value="Translation proteins SH3-like domain"/>
    <property type="match status" value="1"/>
</dbReference>
<dbReference type="PROSITE" id="PS01275">
    <property type="entry name" value="EFP"/>
    <property type="match status" value="1"/>
</dbReference>
<reference key="1">
    <citation type="submission" date="2008-03" db="EMBL/GenBank/DDBJ databases">
        <title>Complete sequence of Leptothrix cholodnii SP-6.</title>
        <authorList>
            <consortium name="US DOE Joint Genome Institute"/>
            <person name="Copeland A."/>
            <person name="Lucas S."/>
            <person name="Lapidus A."/>
            <person name="Glavina del Rio T."/>
            <person name="Dalin E."/>
            <person name="Tice H."/>
            <person name="Bruce D."/>
            <person name="Goodwin L."/>
            <person name="Pitluck S."/>
            <person name="Chertkov O."/>
            <person name="Brettin T."/>
            <person name="Detter J.C."/>
            <person name="Han C."/>
            <person name="Kuske C.R."/>
            <person name="Schmutz J."/>
            <person name="Larimer F."/>
            <person name="Land M."/>
            <person name="Hauser L."/>
            <person name="Kyrpides N."/>
            <person name="Lykidis A."/>
            <person name="Emerson D."/>
            <person name="Richardson P."/>
        </authorList>
    </citation>
    <scope>NUCLEOTIDE SEQUENCE [LARGE SCALE GENOMIC DNA]</scope>
    <source>
        <strain>ATCC 51168 / LMG 8142 / SP-6</strain>
    </source>
</reference>
<protein>
    <recommendedName>
        <fullName evidence="1">Elongation factor P</fullName>
        <shortName evidence="1">EF-P</shortName>
    </recommendedName>
</protein>
<keyword id="KW-0963">Cytoplasm</keyword>
<keyword id="KW-0251">Elongation factor</keyword>
<keyword id="KW-0648">Protein biosynthesis</keyword>
<keyword id="KW-1185">Reference proteome</keyword>